<feature type="chain" id="PRO_1000055405" description="Large ribosomal subunit protein uL13">
    <location>
        <begin position="1"/>
        <end position="154"/>
    </location>
</feature>
<feature type="region of interest" description="Disordered" evidence="2">
    <location>
        <begin position="131"/>
        <end position="154"/>
    </location>
</feature>
<organism>
    <name type="scientific">Maricaulis maris (strain MCS10)</name>
    <name type="common">Caulobacter maris</name>
    <dbReference type="NCBI Taxonomy" id="394221"/>
    <lineage>
        <taxon>Bacteria</taxon>
        <taxon>Pseudomonadati</taxon>
        <taxon>Pseudomonadota</taxon>
        <taxon>Alphaproteobacteria</taxon>
        <taxon>Maricaulales</taxon>
        <taxon>Maricaulaceae</taxon>
        <taxon>Maricaulis</taxon>
    </lineage>
</organism>
<gene>
    <name evidence="1" type="primary">rplM</name>
    <name type="ordered locus">Mmar10_1514</name>
</gene>
<reference key="1">
    <citation type="submission" date="2006-08" db="EMBL/GenBank/DDBJ databases">
        <title>Complete sequence of Maricaulis maris MCS10.</title>
        <authorList>
            <consortium name="US DOE Joint Genome Institute"/>
            <person name="Copeland A."/>
            <person name="Lucas S."/>
            <person name="Lapidus A."/>
            <person name="Barry K."/>
            <person name="Detter J.C."/>
            <person name="Glavina del Rio T."/>
            <person name="Hammon N."/>
            <person name="Israni S."/>
            <person name="Dalin E."/>
            <person name="Tice H."/>
            <person name="Pitluck S."/>
            <person name="Saunders E."/>
            <person name="Brettin T."/>
            <person name="Bruce D."/>
            <person name="Han C."/>
            <person name="Tapia R."/>
            <person name="Gilna P."/>
            <person name="Schmutz J."/>
            <person name="Larimer F."/>
            <person name="Land M."/>
            <person name="Hauser L."/>
            <person name="Kyrpides N."/>
            <person name="Mikhailova N."/>
            <person name="Viollier P."/>
            <person name="Stephens C."/>
            <person name="Richardson P."/>
        </authorList>
    </citation>
    <scope>NUCLEOTIDE SEQUENCE [LARGE SCALE GENOMIC DNA]</scope>
    <source>
        <strain>MCS10</strain>
    </source>
</reference>
<dbReference type="EMBL" id="CP000449">
    <property type="protein sequence ID" value="ABI65806.1"/>
    <property type="molecule type" value="Genomic_DNA"/>
</dbReference>
<dbReference type="RefSeq" id="WP_011643453.1">
    <property type="nucleotide sequence ID" value="NC_008347.1"/>
</dbReference>
<dbReference type="SMR" id="Q0API1"/>
<dbReference type="STRING" id="394221.Mmar10_1514"/>
<dbReference type="KEGG" id="mmr:Mmar10_1514"/>
<dbReference type="eggNOG" id="COG0102">
    <property type="taxonomic scope" value="Bacteria"/>
</dbReference>
<dbReference type="HOGENOM" id="CLU_082184_2_0_5"/>
<dbReference type="OrthoDB" id="9801330at2"/>
<dbReference type="Proteomes" id="UP000001964">
    <property type="component" value="Chromosome"/>
</dbReference>
<dbReference type="GO" id="GO:0022625">
    <property type="term" value="C:cytosolic large ribosomal subunit"/>
    <property type="evidence" value="ECO:0007669"/>
    <property type="project" value="TreeGrafter"/>
</dbReference>
<dbReference type="GO" id="GO:0003729">
    <property type="term" value="F:mRNA binding"/>
    <property type="evidence" value="ECO:0007669"/>
    <property type="project" value="TreeGrafter"/>
</dbReference>
<dbReference type="GO" id="GO:0003735">
    <property type="term" value="F:structural constituent of ribosome"/>
    <property type="evidence" value="ECO:0007669"/>
    <property type="project" value="InterPro"/>
</dbReference>
<dbReference type="GO" id="GO:0017148">
    <property type="term" value="P:negative regulation of translation"/>
    <property type="evidence" value="ECO:0007669"/>
    <property type="project" value="TreeGrafter"/>
</dbReference>
<dbReference type="GO" id="GO:0006412">
    <property type="term" value="P:translation"/>
    <property type="evidence" value="ECO:0007669"/>
    <property type="project" value="UniProtKB-UniRule"/>
</dbReference>
<dbReference type="CDD" id="cd00392">
    <property type="entry name" value="Ribosomal_L13"/>
    <property type="match status" value="1"/>
</dbReference>
<dbReference type="FunFam" id="3.90.1180.10:FF:000001">
    <property type="entry name" value="50S ribosomal protein L13"/>
    <property type="match status" value="1"/>
</dbReference>
<dbReference type="Gene3D" id="3.90.1180.10">
    <property type="entry name" value="Ribosomal protein L13"/>
    <property type="match status" value="1"/>
</dbReference>
<dbReference type="HAMAP" id="MF_01366">
    <property type="entry name" value="Ribosomal_uL13"/>
    <property type="match status" value="1"/>
</dbReference>
<dbReference type="InterPro" id="IPR005822">
    <property type="entry name" value="Ribosomal_uL13"/>
</dbReference>
<dbReference type="InterPro" id="IPR005823">
    <property type="entry name" value="Ribosomal_uL13_bac-type"/>
</dbReference>
<dbReference type="InterPro" id="IPR036899">
    <property type="entry name" value="Ribosomal_uL13_sf"/>
</dbReference>
<dbReference type="NCBIfam" id="TIGR01066">
    <property type="entry name" value="rplM_bact"/>
    <property type="match status" value="1"/>
</dbReference>
<dbReference type="PANTHER" id="PTHR11545:SF2">
    <property type="entry name" value="LARGE RIBOSOMAL SUBUNIT PROTEIN UL13M"/>
    <property type="match status" value="1"/>
</dbReference>
<dbReference type="PANTHER" id="PTHR11545">
    <property type="entry name" value="RIBOSOMAL PROTEIN L13"/>
    <property type="match status" value="1"/>
</dbReference>
<dbReference type="Pfam" id="PF00572">
    <property type="entry name" value="Ribosomal_L13"/>
    <property type="match status" value="1"/>
</dbReference>
<dbReference type="PIRSF" id="PIRSF002181">
    <property type="entry name" value="Ribosomal_L13"/>
    <property type="match status" value="1"/>
</dbReference>
<dbReference type="SUPFAM" id="SSF52161">
    <property type="entry name" value="Ribosomal protein L13"/>
    <property type="match status" value="1"/>
</dbReference>
<proteinExistence type="inferred from homology"/>
<protein>
    <recommendedName>
        <fullName evidence="1">Large ribosomal subunit protein uL13</fullName>
    </recommendedName>
    <alternativeName>
        <fullName evidence="3">50S ribosomal protein L13</fullName>
    </alternativeName>
</protein>
<accession>Q0API1</accession>
<name>RL13_MARMM</name>
<sequence>MKTISVKPADVEKKWVVIDAEGAVVGRLAAYVATRLRGKHRPDYTPHVDMGDNIIIVNADKVVFTGKKRDDKRYYHHTGHPGGIKETSPAKILDGRFPERVVEKAVLRMLPKDSPLARQQYSNLRVYAGPDHKHEAQQPEVVDFKSMNSKNTRG</sequence>
<keyword id="KW-1185">Reference proteome</keyword>
<keyword id="KW-0687">Ribonucleoprotein</keyword>
<keyword id="KW-0689">Ribosomal protein</keyword>
<comment type="function">
    <text evidence="1">This protein is one of the early assembly proteins of the 50S ribosomal subunit, although it is not seen to bind rRNA by itself. It is important during the early stages of 50S assembly.</text>
</comment>
<comment type="subunit">
    <text evidence="1">Part of the 50S ribosomal subunit.</text>
</comment>
<comment type="similarity">
    <text evidence="1">Belongs to the universal ribosomal protein uL13 family.</text>
</comment>
<evidence type="ECO:0000255" key="1">
    <source>
        <dbReference type="HAMAP-Rule" id="MF_01366"/>
    </source>
</evidence>
<evidence type="ECO:0000256" key="2">
    <source>
        <dbReference type="SAM" id="MobiDB-lite"/>
    </source>
</evidence>
<evidence type="ECO:0000305" key="3"/>